<comment type="function">
    <text evidence="1">Catalyzes the reversible reaction in which hydroxymethyl group from 5,10-methylenetetrahydrofolate is transferred onto alpha-ketoisovalerate to form ketopantoate.</text>
</comment>
<comment type="catalytic activity">
    <reaction evidence="1">
        <text>3-methyl-2-oxobutanoate + (6R)-5,10-methylene-5,6,7,8-tetrahydrofolate + H2O = 2-dehydropantoate + (6S)-5,6,7,8-tetrahydrofolate</text>
        <dbReference type="Rhea" id="RHEA:11824"/>
        <dbReference type="ChEBI" id="CHEBI:11561"/>
        <dbReference type="ChEBI" id="CHEBI:11851"/>
        <dbReference type="ChEBI" id="CHEBI:15377"/>
        <dbReference type="ChEBI" id="CHEBI:15636"/>
        <dbReference type="ChEBI" id="CHEBI:57453"/>
        <dbReference type="EC" id="2.1.2.11"/>
    </reaction>
</comment>
<comment type="cofactor">
    <cofactor evidence="1">
        <name>Mg(2+)</name>
        <dbReference type="ChEBI" id="CHEBI:18420"/>
    </cofactor>
    <text evidence="1">Binds 1 Mg(2+) ion per subunit.</text>
</comment>
<comment type="pathway">
    <text evidence="1">Cofactor biosynthesis; (R)-pantothenate biosynthesis; (R)-pantoate from 3-methyl-2-oxobutanoate: step 1/2.</text>
</comment>
<comment type="subunit">
    <text evidence="1">Homodecamer; pentamer of dimers.</text>
</comment>
<comment type="subcellular location">
    <subcellularLocation>
        <location evidence="1">Cytoplasm</location>
    </subcellularLocation>
</comment>
<comment type="similarity">
    <text evidence="1">Belongs to the PanB family.</text>
</comment>
<accession>A9R1G2</accession>
<feature type="chain" id="PRO_1000097024" description="3-methyl-2-oxobutanoate hydroxymethyltransferase">
    <location>
        <begin position="1"/>
        <end position="265"/>
    </location>
</feature>
<feature type="active site" description="Proton acceptor" evidence="1">
    <location>
        <position position="181"/>
    </location>
</feature>
<feature type="binding site" evidence="1">
    <location>
        <begin position="45"/>
        <end position="46"/>
    </location>
    <ligand>
        <name>3-methyl-2-oxobutanoate</name>
        <dbReference type="ChEBI" id="CHEBI:11851"/>
    </ligand>
</feature>
<feature type="binding site" evidence="1">
    <location>
        <position position="45"/>
    </location>
    <ligand>
        <name>Mg(2+)</name>
        <dbReference type="ChEBI" id="CHEBI:18420"/>
    </ligand>
</feature>
<feature type="binding site" evidence="1">
    <location>
        <position position="84"/>
    </location>
    <ligand>
        <name>3-methyl-2-oxobutanoate</name>
        <dbReference type="ChEBI" id="CHEBI:11851"/>
    </ligand>
</feature>
<feature type="binding site" evidence="1">
    <location>
        <position position="84"/>
    </location>
    <ligand>
        <name>Mg(2+)</name>
        <dbReference type="ChEBI" id="CHEBI:18420"/>
    </ligand>
</feature>
<feature type="binding site" evidence="1">
    <location>
        <position position="112"/>
    </location>
    <ligand>
        <name>3-methyl-2-oxobutanoate</name>
        <dbReference type="ChEBI" id="CHEBI:11851"/>
    </ligand>
</feature>
<feature type="binding site" evidence="1">
    <location>
        <position position="114"/>
    </location>
    <ligand>
        <name>Mg(2+)</name>
        <dbReference type="ChEBI" id="CHEBI:18420"/>
    </ligand>
</feature>
<keyword id="KW-0963">Cytoplasm</keyword>
<keyword id="KW-0460">Magnesium</keyword>
<keyword id="KW-0479">Metal-binding</keyword>
<keyword id="KW-0566">Pantothenate biosynthesis</keyword>
<keyword id="KW-0808">Transferase</keyword>
<organism>
    <name type="scientific">Yersinia pestis bv. Antiqua (strain Angola)</name>
    <dbReference type="NCBI Taxonomy" id="349746"/>
    <lineage>
        <taxon>Bacteria</taxon>
        <taxon>Pseudomonadati</taxon>
        <taxon>Pseudomonadota</taxon>
        <taxon>Gammaproteobacteria</taxon>
        <taxon>Enterobacterales</taxon>
        <taxon>Yersiniaceae</taxon>
        <taxon>Yersinia</taxon>
    </lineage>
</organism>
<evidence type="ECO:0000255" key="1">
    <source>
        <dbReference type="HAMAP-Rule" id="MF_00156"/>
    </source>
</evidence>
<gene>
    <name evidence="1" type="primary">panB</name>
    <name type="ordered locus">YpAngola_A1011</name>
</gene>
<dbReference type="EC" id="2.1.2.11" evidence="1"/>
<dbReference type="EMBL" id="CP000901">
    <property type="protein sequence ID" value="ABX85626.1"/>
    <property type="molecule type" value="Genomic_DNA"/>
</dbReference>
<dbReference type="RefSeq" id="WP_002209349.1">
    <property type="nucleotide sequence ID" value="NZ_CP009935.1"/>
</dbReference>
<dbReference type="SMR" id="A9R1G2"/>
<dbReference type="GeneID" id="57975308"/>
<dbReference type="KEGG" id="ypg:YpAngola_A1011"/>
<dbReference type="PATRIC" id="fig|349746.12.peg.1959"/>
<dbReference type="UniPathway" id="UPA00028">
    <property type="reaction ID" value="UER00003"/>
</dbReference>
<dbReference type="GO" id="GO:0005737">
    <property type="term" value="C:cytoplasm"/>
    <property type="evidence" value="ECO:0007669"/>
    <property type="project" value="UniProtKB-SubCell"/>
</dbReference>
<dbReference type="GO" id="GO:0003864">
    <property type="term" value="F:3-methyl-2-oxobutanoate hydroxymethyltransferase activity"/>
    <property type="evidence" value="ECO:0007669"/>
    <property type="project" value="UniProtKB-UniRule"/>
</dbReference>
<dbReference type="GO" id="GO:0000287">
    <property type="term" value="F:magnesium ion binding"/>
    <property type="evidence" value="ECO:0007669"/>
    <property type="project" value="TreeGrafter"/>
</dbReference>
<dbReference type="GO" id="GO:0015940">
    <property type="term" value="P:pantothenate biosynthetic process"/>
    <property type="evidence" value="ECO:0007669"/>
    <property type="project" value="UniProtKB-UniRule"/>
</dbReference>
<dbReference type="CDD" id="cd06557">
    <property type="entry name" value="KPHMT-like"/>
    <property type="match status" value="1"/>
</dbReference>
<dbReference type="FunFam" id="3.20.20.60:FF:000003">
    <property type="entry name" value="3-methyl-2-oxobutanoate hydroxymethyltransferase"/>
    <property type="match status" value="1"/>
</dbReference>
<dbReference type="Gene3D" id="3.20.20.60">
    <property type="entry name" value="Phosphoenolpyruvate-binding domains"/>
    <property type="match status" value="1"/>
</dbReference>
<dbReference type="HAMAP" id="MF_00156">
    <property type="entry name" value="PanB"/>
    <property type="match status" value="1"/>
</dbReference>
<dbReference type="InterPro" id="IPR003700">
    <property type="entry name" value="Pantoate_hydroxy_MeTrfase"/>
</dbReference>
<dbReference type="InterPro" id="IPR015813">
    <property type="entry name" value="Pyrv/PenolPyrv_kinase-like_dom"/>
</dbReference>
<dbReference type="InterPro" id="IPR040442">
    <property type="entry name" value="Pyrv_kinase-like_dom_sf"/>
</dbReference>
<dbReference type="NCBIfam" id="TIGR00222">
    <property type="entry name" value="panB"/>
    <property type="match status" value="1"/>
</dbReference>
<dbReference type="NCBIfam" id="NF001452">
    <property type="entry name" value="PRK00311.1"/>
    <property type="match status" value="1"/>
</dbReference>
<dbReference type="PANTHER" id="PTHR20881">
    <property type="entry name" value="3-METHYL-2-OXOBUTANOATE HYDROXYMETHYLTRANSFERASE"/>
    <property type="match status" value="1"/>
</dbReference>
<dbReference type="PANTHER" id="PTHR20881:SF0">
    <property type="entry name" value="3-METHYL-2-OXOBUTANOATE HYDROXYMETHYLTRANSFERASE"/>
    <property type="match status" value="1"/>
</dbReference>
<dbReference type="Pfam" id="PF02548">
    <property type="entry name" value="Pantoate_transf"/>
    <property type="match status" value="1"/>
</dbReference>
<dbReference type="PIRSF" id="PIRSF000388">
    <property type="entry name" value="Pantoate_hydroxy_MeTrfase"/>
    <property type="match status" value="1"/>
</dbReference>
<dbReference type="SUPFAM" id="SSF51621">
    <property type="entry name" value="Phosphoenolpyruvate/pyruvate domain"/>
    <property type="match status" value="1"/>
</dbReference>
<sequence length="265" mass="28699">MKTTTMSQLRQWKQEKRKFATLTAYDASFAQLFAEQGIQVLLVGDSLGMTLQGFDSTLPVTVADMAYHTRAVRRGAPHCLLLADMPFMSYATPELAFTHAAELMRAGANMVKLEGGSWLCDTIRMLAERAVPVCGHLGLTPQSVNIFGGYKVQGREEVAANQLLQDAIALEQAGAQLLVLECVPVELAQRVTEELTIPVIGIGAGNVTDGQILVMHDALGITGGHTPKFSKNFLAHSAGDIRAAIKLYIEEVEGGIYPAEEHTFQ</sequence>
<proteinExistence type="inferred from homology"/>
<name>PANB_YERPG</name>
<protein>
    <recommendedName>
        <fullName evidence="1">3-methyl-2-oxobutanoate hydroxymethyltransferase</fullName>
        <ecNumber evidence="1">2.1.2.11</ecNumber>
    </recommendedName>
    <alternativeName>
        <fullName evidence="1">Ketopantoate hydroxymethyltransferase</fullName>
        <shortName evidence="1">KPHMT</shortName>
    </alternativeName>
</protein>
<reference key="1">
    <citation type="journal article" date="2010" name="J. Bacteriol.">
        <title>Genome sequence of the deep-rooted Yersinia pestis strain Angola reveals new insights into the evolution and pangenome of the plague bacterium.</title>
        <authorList>
            <person name="Eppinger M."/>
            <person name="Worsham P.L."/>
            <person name="Nikolich M.P."/>
            <person name="Riley D.R."/>
            <person name="Sebastian Y."/>
            <person name="Mou S."/>
            <person name="Achtman M."/>
            <person name="Lindler L.E."/>
            <person name="Ravel J."/>
        </authorList>
    </citation>
    <scope>NUCLEOTIDE SEQUENCE [LARGE SCALE GENOMIC DNA]</scope>
    <source>
        <strain>Angola</strain>
    </source>
</reference>